<organism>
    <name type="scientific">Shewanella denitrificans (strain OS217 / ATCC BAA-1090 / DSM 15013)</name>
    <dbReference type="NCBI Taxonomy" id="318161"/>
    <lineage>
        <taxon>Bacteria</taxon>
        <taxon>Pseudomonadati</taxon>
        <taxon>Pseudomonadota</taxon>
        <taxon>Gammaproteobacteria</taxon>
        <taxon>Alteromonadales</taxon>
        <taxon>Shewanellaceae</taxon>
        <taxon>Shewanella</taxon>
    </lineage>
</organism>
<dbReference type="EC" id="2.7.7.8" evidence="1"/>
<dbReference type="EMBL" id="CP000302">
    <property type="protein sequence ID" value="ABE54307.1"/>
    <property type="status" value="ALT_INIT"/>
    <property type="molecule type" value="Genomic_DNA"/>
</dbReference>
<dbReference type="RefSeq" id="WP_041405684.1">
    <property type="nucleotide sequence ID" value="NC_007954.1"/>
</dbReference>
<dbReference type="SMR" id="Q12QG9"/>
<dbReference type="STRING" id="318161.Sden_1019"/>
<dbReference type="KEGG" id="sdn:Sden_1019"/>
<dbReference type="eggNOG" id="COG1185">
    <property type="taxonomic scope" value="Bacteria"/>
</dbReference>
<dbReference type="HOGENOM" id="CLU_004217_2_2_6"/>
<dbReference type="OrthoDB" id="9804305at2"/>
<dbReference type="Proteomes" id="UP000001982">
    <property type="component" value="Chromosome"/>
</dbReference>
<dbReference type="GO" id="GO:0005829">
    <property type="term" value="C:cytosol"/>
    <property type="evidence" value="ECO:0007669"/>
    <property type="project" value="TreeGrafter"/>
</dbReference>
<dbReference type="GO" id="GO:0000175">
    <property type="term" value="F:3'-5'-RNA exonuclease activity"/>
    <property type="evidence" value="ECO:0007669"/>
    <property type="project" value="TreeGrafter"/>
</dbReference>
<dbReference type="GO" id="GO:0000287">
    <property type="term" value="F:magnesium ion binding"/>
    <property type="evidence" value="ECO:0007669"/>
    <property type="project" value="UniProtKB-UniRule"/>
</dbReference>
<dbReference type="GO" id="GO:0004654">
    <property type="term" value="F:polyribonucleotide nucleotidyltransferase activity"/>
    <property type="evidence" value="ECO:0007669"/>
    <property type="project" value="UniProtKB-UniRule"/>
</dbReference>
<dbReference type="GO" id="GO:0003723">
    <property type="term" value="F:RNA binding"/>
    <property type="evidence" value="ECO:0007669"/>
    <property type="project" value="UniProtKB-UniRule"/>
</dbReference>
<dbReference type="GO" id="GO:0006402">
    <property type="term" value="P:mRNA catabolic process"/>
    <property type="evidence" value="ECO:0007669"/>
    <property type="project" value="UniProtKB-UniRule"/>
</dbReference>
<dbReference type="GO" id="GO:0006396">
    <property type="term" value="P:RNA processing"/>
    <property type="evidence" value="ECO:0007669"/>
    <property type="project" value="InterPro"/>
</dbReference>
<dbReference type="CDD" id="cd02393">
    <property type="entry name" value="KH-I_PNPase"/>
    <property type="match status" value="1"/>
</dbReference>
<dbReference type="CDD" id="cd11363">
    <property type="entry name" value="RNase_PH_PNPase_1"/>
    <property type="match status" value="1"/>
</dbReference>
<dbReference type="CDD" id="cd11364">
    <property type="entry name" value="RNase_PH_PNPase_2"/>
    <property type="match status" value="1"/>
</dbReference>
<dbReference type="CDD" id="cd04472">
    <property type="entry name" value="S1_PNPase"/>
    <property type="match status" value="1"/>
</dbReference>
<dbReference type="FunFam" id="2.40.50.140:FF:000023">
    <property type="entry name" value="Polyribonucleotide nucleotidyltransferase"/>
    <property type="match status" value="1"/>
</dbReference>
<dbReference type="FunFam" id="3.30.1370.10:FF:000001">
    <property type="entry name" value="Polyribonucleotide nucleotidyltransferase"/>
    <property type="match status" value="1"/>
</dbReference>
<dbReference type="FunFam" id="3.30.230.70:FF:000001">
    <property type="entry name" value="Polyribonucleotide nucleotidyltransferase"/>
    <property type="match status" value="1"/>
</dbReference>
<dbReference type="FunFam" id="3.30.230.70:FF:000002">
    <property type="entry name" value="Polyribonucleotide nucleotidyltransferase"/>
    <property type="match status" value="1"/>
</dbReference>
<dbReference type="Gene3D" id="3.30.230.70">
    <property type="entry name" value="GHMP Kinase, N-terminal domain"/>
    <property type="match status" value="2"/>
</dbReference>
<dbReference type="Gene3D" id="3.30.1370.10">
    <property type="entry name" value="K Homology domain, type 1"/>
    <property type="match status" value="1"/>
</dbReference>
<dbReference type="Gene3D" id="2.40.50.140">
    <property type="entry name" value="Nucleic acid-binding proteins"/>
    <property type="match status" value="1"/>
</dbReference>
<dbReference type="HAMAP" id="MF_01595">
    <property type="entry name" value="PNPase"/>
    <property type="match status" value="1"/>
</dbReference>
<dbReference type="InterPro" id="IPR001247">
    <property type="entry name" value="ExoRNase_PH_dom1"/>
</dbReference>
<dbReference type="InterPro" id="IPR015847">
    <property type="entry name" value="ExoRNase_PH_dom2"/>
</dbReference>
<dbReference type="InterPro" id="IPR036345">
    <property type="entry name" value="ExoRNase_PH_dom2_sf"/>
</dbReference>
<dbReference type="InterPro" id="IPR004087">
    <property type="entry name" value="KH_dom"/>
</dbReference>
<dbReference type="InterPro" id="IPR004088">
    <property type="entry name" value="KH_dom_type_1"/>
</dbReference>
<dbReference type="InterPro" id="IPR036612">
    <property type="entry name" value="KH_dom_type_1_sf"/>
</dbReference>
<dbReference type="InterPro" id="IPR012340">
    <property type="entry name" value="NA-bd_OB-fold"/>
</dbReference>
<dbReference type="InterPro" id="IPR012162">
    <property type="entry name" value="PNPase"/>
</dbReference>
<dbReference type="InterPro" id="IPR027408">
    <property type="entry name" value="PNPase/RNase_PH_dom_sf"/>
</dbReference>
<dbReference type="InterPro" id="IPR015848">
    <property type="entry name" value="PNPase_PH_RNA-bd_bac/org-type"/>
</dbReference>
<dbReference type="InterPro" id="IPR036456">
    <property type="entry name" value="PNPase_PH_RNA-bd_sf"/>
</dbReference>
<dbReference type="InterPro" id="IPR020568">
    <property type="entry name" value="Ribosomal_Su5_D2-typ_SF"/>
</dbReference>
<dbReference type="InterPro" id="IPR003029">
    <property type="entry name" value="S1_domain"/>
</dbReference>
<dbReference type="NCBIfam" id="TIGR03591">
    <property type="entry name" value="polynuc_phos"/>
    <property type="match status" value="1"/>
</dbReference>
<dbReference type="NCBIfam" id="NF008805">
    <property type="entry name" value="PRK11824.1"/>
    <property type="match status" value="1"/>
</dbReference>
<dbReference type="PANTHER" id="PTHR11252">
    <property type="entry name" value="POLYRIBONUCLEOTIDE NUCLEOTIDYLTRANSFERASE"/>
    <property type="match status" value="1"/>
</dbReference>
<dbReference type="PANTHER" id="PTHR11252:SF0">
    <property type="entry name" value="POLYRIBONUCLEOTIDE NUCLEOTIDYLTRANSFERASE 1, MITOCHONDRIAL"/>
    <property type="match status" value="1"/>
</dbReference>
<dbReference type="Pfam" id="PF00013">
    <property type="entry name" value="KH_1"/>
    <property type="match status" value="1"/>
</dbReference>
<dbReference type="Pfam" id="PF03726">
    <property type="entry name" value="PNPase"/>
    <property type="match status" value="1"/>
</dbReference>
<dbReference type="Pfam" id="PF01138">
    <property type="entry name" value="RNase_PH"/>
    <property type="match status" value="2"/>
</dbReference>
<dbReference type="Pfam" id="PF03725">
    <property type="entry name" value="RNase_PH_C"/>
    <property type="match status" value="2"/>
</dbReference>
<dbReference type="Pfam" id="PF00575">
    <property type="entry name" value="S1"/>
    <property type="match status" value="1"/>
</dbReference>
<dbReference type="PIRSF" id="PIRSF005499">
    <property type="entry name" value="PNPase"/>
    <property type="match status" value="1"/>
</dbReference>
<dbReference type="SMART" id="SM00322">
    <property type="entry name" value="KH"/>
    <property type="match status" value="1"/>
</dbReference>
<dbReference type="SMART" id="SM00316">
    <property type="entry name" value="S1"/>
    <property type="match status" value="1"/>
</dbReference>
<dbReference type="SUPFAM" id="SSF54791">
    <property type="entry name" value="Eukaryotic type KH-domain (KH-domain type I)"/>
    <property type="match status" value="1"/>
</dbReference>
<dbReference type="SUPFAM" id="SSF50249">
    <property type="entry name" value="Nucleic acid-binding proteins"/>
    <property type="match status" value="1"/>
</dbReference>
<dbReference type="SUPFAM" id="SSF46915">
    <property type="entry name" value="Polynucleotide phosphorylase/guanosine pentaphosphate synthase (PNPase/GPSI), domain 3"/>
    <property type="match status" value="1"/>
</dbReference>
<dbReference type="SUPFAM" id="SSF55666">
    <property type="entry name" value="Ribonuclease PH domain 2-like"/>
    <property type="match status" value="2"/>
</dbReference>
<dbReference type="SUPFAM" id="SSF54211">
    <property type="entry name" value="Ribosomal protein S5 domain 2-like"/>
    <property type="match status" value="2"/>
</dbReference>
<dbReference type="PROSITE" id="PS50084">
    <property type="entry name" value="KH_TYPE_1"/>
    <property type="match status" value="1"/>
</dbReference>
<dbReference type="PROSITE" id="PS50126">
    <property type="entry name" value="S1"/>
    <property type="match status" value="1"/>
</dbReference>
<reference key="1">
    <citation type="submission" date="2006-03" db="EMBL/GenBank/DDBJ databases">
        <title>Complete sequence of Shewanella denitrificans OS217.</title>
        <authorList>
            <consortium name="US DOE Joint Genome Institute"/>
            <person name="Copeland A."/>
            <person name="Lucas S."/>
            <person name="Lapidus A."/>
            <person name="Barry K."/>
            <person name="Detter J.C."/>
            <person name="Glavina del Rio T."/>
            <person name="Hammon N."/>
            <person name="Israni S."/>
            <person name="Dalin E."/>
            <person name="Tice H."/>
            <person name="Pitluck S."/>
            <person name="Brettin T."/>
            <person name="Bruce D."/>
            <person name="Han C."/>
            <person name="Tapia R."/>
            <person name="Gilna P."/>
            <person name="Kiss H."/>
            <person name="Schmutz J."/>
            <person name="Larimer F."/>
            <person name="Land M."/>
            <person name="Hauser L."/>
            <person name="Kyrpides N."/>
            <person name="Lykidis A."/>
            <person name="Richardson P."/>
        </authorList>
    </citation>
    <scope>NUCLEOTIDE SEQUENCE [LARGE SCALE GENOMIC DNA]</scope>
    <source>
        <strain>OS217 / ATCC BAA-1090 / DSM 15013</strain>
    </source>
</reference>
<evidence type="ECO:0000255" key="1">
    <source>
        <dbReference type="HAMAP-Rule" id="MF_01595"/>
    </source>
</evidence>
<evidence type="ECO:0000305" key="2"/>
<name>PNP_SHEDO</name>
<keyword id="KW-0963">Cytoplasm</keyword>
<keyword id="KW-0460">Magnesium</keyword>
<keyword id="KW-0479">Metal-binding</keyword>
<keyword id="KW-0548">Nucleotidyltransferase</keyword>
<keyword id="KW-1185">Reference proteome</keyword>
<keyword id="KW-0694">RNA-binding</keyword>
<keyword id="KW-0808">Transferase</keyword>
<feature type="chain" id="PRO_0000329839" description="Polyribonucleotide nucleotidyltransferase">
    <location>
        <begin position="1"/>
        <end position="698"/>
    </location>
</feature>
<feature type="domain" description="KH" evidence="1">
    <location>
        <begin position="552"/>
        <end position="611"/>
    </location>
</feature>
<feature type="domain" description="S1 motif" evidence="1">
    <location>
        <begin position="621"/>
        <end position="689"/>
    </location>
</feature>
<feature type="binding site" evidence="1">
    <location>
        <position position="485"/>
    </location>
    <ligand>
        <name>Mg(2+)</name>
        <dbReference type="ChEBI" id="CHEBI:18420"/>
    </ligand>
</feature>
<feature type="binding site" evidence="1">
    <location>
        <position position="491"/>
    </location>
    <ligand>
        <name>Mg(2+)</name>
        <dbReference type="ChEBI" id="CHEBI:18420"/>
    </ligand>
</feature>
<sequence length="698" mass="75278">MNPIVKSFEYGQHTVTLETGVIARQADAAVLASMGDTTVLVTVVGKKVADLSRDFFPLTVNYQEKTYAAGKIPGGFFKREGRPSEDETLIARLIDRPIRPLFPNGFKNEVQVIITVVSVDPQIEPDIISMIGTSAALAISGIPFSGPLGAARVGYINGEYLLNPTVDQLATSSLNLVVAGTKAAVLMVESEAKALAEEIMLGAVTYGHDQQQVVVDAIAEFKAEAGKPTWDWTAPVQDQALVAKIKELAEAGMTDAYQIEVKQDRYVQVGVVKAAAKAALVAENPDVDTREVDNLLGSLEKNVVRSRIIAGKPRIDGREPDMIRALNVLAGVLPRTHGSSLFTRGETQALVTCTLGTERDAQKIDSIMGERTNRFMLHYNFPPYSVGETGMVGSPKRREIGHGKLAWRGMNAVMPTAEEFPYSIRVVSEITESNGSSSMASVCGTSLALMDAGVPIKTSVAGIAMGLVKEGDDFVVLSDILGDEDHLGDMDFKVAGTRDGITALQMDIKIEGITKEIMDIALQQAYGARVHILNVMDQAIGTHRGDISAHAPRITTIKINPEKIRDVIGKGGAVIRALTEETGTTIELDDDGTVKIASSNGEATKEAIRRIEEITAEVEVGRVYNGKVIRIVDFGAFINILPGKDGLVHISQISDERVANVSDHLEMNQDVKVKVMEVDRQGRVRLSIKEAQEKVAAE</sequence>
<accession>Q12QG9</accession>
<comment type="function">
    <text evidence="1">Involved in mRNA degradation. Catalyzes the phosphorolysis of single-stranded polyribonucleotides processively in the 3'- to 5'-direction.</text>
</comment>
<comment type="catalytic activity">
    <reaction evidence="1">
        <text>RNA(n+1) + phosphate = RNA(n) + a ribonucleoside 5'-diphosphate</text>
        <dbReference type="Rhea" id="RHEA:22096"/>
        <dbReference type="Rhea" id="RHEA-COMP:14527"/>
        <dbReference type="Rhea" id="RHEA-COMP:17342"/>
        <dbReference type="ChEBI" id="CHEBI:43474"/>
        <dbReference type="ChEBI" id="CHEBI:57930"/>
        <dbReference type="ChEBI" id="CHEBI:140395"/>
        <dbReference type="EC" id="2.7.7.8"/>
    </reaction>
</comment>
<comment type="cofactor">
    <cofactor evidence="1">
        <name>Mg(2+)</name>
        <dbReference type="ChEBI" id="CHEBI:18420"/>
    </cofactor>
</comment>
<comment type="subunit">
    <text evidence="1">Component of the RNA degradosome, which is a multiprotein complex involved in RNA processing and mRNA degradation.</text>
</comment>
<comment type="subcellular location">
    <subcellularLocation>
        <location evidence="1">Cytoplasm</location>
    </subcellularLocation>
</comment>
<comment type="similarity">
    <text evidence="1">Belongs to the polyribonucleotide nucleotidyltransferase family.</text>
</comment>
<comment type="sequence caution" evidence="2">
    <conflict type="erroneous initiation">
        <sequence resource="EMBL-CDS" id="ABE54307"/>
    </conflict>
</comment>
<protein>
    <recommendedName>
        <fullName evidence="1">Polyribonucleotide nucleotidyltransferase</fullName>
        <ecNumber evidence="1">2.7.7.8</ecNumber>
    </recommendedName>
    <alternativeName>
        <fullName evidence="1">Polynucleotide phosphorylase</fullName>
        <shortName evidence="1">PNPase</shortName>
    </alternativeName>
</protein>
<proteinExistence type="inferred from homology"/>
<gene>
    <name evidence="1" type="primary">pnp</name>
    <name type="ordered locus">Sden_1019</name>
</gene>